<dbReference type="EMBL" id="AE009949">
    <property type="protein sequence ID" value="AAL98599.1"/>
    <property type="molecule type" value="Genomic_DNA"/>
</dbReference>
<dbReference type="RefSeq" id="WP_002982262.1">
    <property type="nucleotide sequence ID" value="NC_003485.1"/>
</dbReference>
<dbReference type="SMR" id="P68902"/>
<dbReference type="GeneID" id="69901552"/>
<dbReference type="KEGG" id="spm:spyM18_2151"/>
<dbReference type="HOGENOM" id="CLU_040318_1_2_9"/>
<dbReference type="GO" id="GO:0022627">
    <property type="term" value="C:cytosolic small ribosomal subunit"/>
    <property type="evidence" value="ECO:0007669"/>
    <property type="project" value="TreeGrafter"/>
</dbReference>
<dbReference type="GO" id="GO:0003735">
    <property type="term" value="F:structural constituent of ribosome"/>
    <property type="evidence" value="ECO:0007669"/>
    <property type="project" value="InterPro"/>
</dbReference>
<dbReference type="GO" id="GO:0006412">
    <property type="term" value="P:translation"/>
    <property type="evidence" value="ECO:0007669"/>
    <property type="project" value="UniProtKB-UniRule"/>
</dbReference>
<dbReference type="CDD" id="cd01425">
    <property type="entry name" value="RPS2"/>
    <property type="match status" value="1"/>
</dbReference>
<dbReference type="FunFam" id="1.10.287.610:FF:000001">
    <property type="entry name" value="30S ribosomal protein S2"/>
    <property type="match status" value="1"/>
</dbReference>
<dbReference type="Gene3D" id="3.40.50.10490">
    <property type="entry name" value="Glucose-6-phosphate isomerase like protein, domain 1"/>
    <property type="match status" value="1"/>
</dbReference>
<dbReference type="Gene3D" id="1.10.287.610">
    <property type="entry name" value="Helix hairpin bin"/>
    <property type="match status" value="1"/>
</dbReference>
<dbReference type="HAMAP" id="MF_00291_B">
    <property type="entry name" value="Ribosomal_uS2_B"/>
    <property type="match status" value="1"/>
</dbReference>
<dbReference type="InterPro" id="IPR001865">
    <property type="entry name" value="Ribosomal_uS2"/>
</dbReference>
<dbReference type="InterPro" id="IPR005706">
    <property type="entry name" value="Ribosomal_uS2_bac/mit/plastid"/>
</dbReference>
<dbReference type="InterPro" id="IPR018130">
    <property type="entry name" value="Ribosomal_uS2_CS"/>
</dbReference>
<dbReference type="InterPro" id="IPR023591">
    <property type="entry name" value="Ribosomal_uS2_flav_dom_sf"/>
</dbReference>
<dbReference type="NCBIfam" id="TIGR01011">
    <property type="entry name" value="rpsB_bact"/>
    <property type="match status" value="1"/>
</dbReference>
<dbReference type="PANTHER" id="PTHR12534">
    <property type="entry name" value="30S RIBOSOMAL PROTEIN S2 PROKARYOTIC AND ORGANELLAR"/>
    <property type="match status" value="1"/>
</dbReference>
<dbReference type="PANTHER" id="PTHR12534:SF0">
    <property type="entry name" value="SMALL RIBOSOMAL SUBUNIT PROTEIN US2M"/>
    <property type="match status" value="1"/>
</dbReference>
<dbReference type="Pfam" id="PF00318">
    <property type="entry name" value="Ribosomal_S2"/>
    <property type="match status" value="1"/>
</dbReference>
<dbReference type="PRINTS" id="PR00395">
    <property type="entry name" value="RIBOSOMALS2"/>
</dbReference>
<dbReference type="SUPFAM" id="SSF52313">
    <property type="entry name" value="Ribosomal protein S2"/>
    <property type="match status" value="1"/>
</dbReference>
<dbReference type="PROSITE" id="PS00962">
    <property type="entry name" value="RIBOSOMAL_S2_1"/>
    <property type="match status" value="1"/>
</dbReference>
<accession>P68902</accession>
<accession>P82483</accession>
<keyword id="KW-0687">Ribonucleoprotein</keyword>
<keyword id="KW-0689">Ribosomal protein</keyword>
<organism>
    <name type="scientific">Streptococcus pyogenes serotype M18 (strain MGAS8232)</name>
    <dbReference type="NCBI Taxonomy" id="186103"/>
    <lineage>
        <taxon>Bacteria</taxon>
        <taxon>Bacillati</taxon>
        <taxon>Bacillota</taxon>
        <taxon>Bacilli</taxon>
        <taxon>Lactobacillales</taxon>
        <taxon>Streptococcaceae</taxon>
        <taxon>Streptococcus</taxon>
    </lineage>
</organism>
<reference key="1">
    <citation type="journal article" date="2002" name="Proc. Natl. Acad. Sci. U.S.A.">
        <title>Genome sequence and comparative microarray analysis of serotype M18 group A Streptococcus strains associated with acute rheumatic fever outbreaks.</title>
        <authorList>
            <person name="Smoot J.C."/>
            <person name="Barbian K.D."/>
            <person name="Van Gompel J.J."/>
            <person name="Smoot L.M."/>
            <person name="Chaussee M.S."/>
            <person name="Sylva G.L."/>
            <person name="Sturdevant D.E."/>
            <person name="Ricklefs S.M."/>
            <person name="Porcella S.F."/>
            <person name="Parkins L.D."/>
            <person name="Beres S.B."/>
            <person name="Campbell D.S."/>
            <person name="Smith T.M."/>
            <person name="Zhang Q."/>
            <person name="Kapur V."/>
            <person name="Daly J.A."/>
            <person name="Veasy L.G."/>
            <person name="Musser J.M."/>
        </authorList>
    </citation>
    <scope>NUCLEOTIDE SEQUENCE [LARGE SCALE GENOMIC DNA]</scope>
    <source>
        <strain>MGAS8232</strain>
    </source>
</reference>
<comment type="similarity">
    <text evidence="2">Belongs to the universal ribosomal protein uS2 family.</text>
</comment>
<feature type="initiator methionine" description="Removed" evidence="1">
    <location>
        <position position="1"/>
    </location>
</feature>
<feature type="chain" id="PRO_0000134256" description="Small ribosomal subunit protein uS2">
    <location>
        <begin position="2"/>
        <end position="255"/>
    </location>
</feature>
<protein>
    <recommendedName>
        <fullName evidence="2">Small ribosomal subunit protein uS2</fullName>
    </recommendedName>
    <alternativeName>
        <fullName>30S ribosomal protein S2</fullName>
    </alternativeName>
</protein>
<proteinExistence type="inferred from homology"/>
<evidence type="ECO:0000250" key="1"/>
<evidence type="ECO:0000305" key="2"/>
<name>RS2_STRP8</name>
<gene>
    <name type="primary">rpsB</name>
    <name type="ordered locus">spyM18_2151</name>
</gene>
<sequence>MAVISMKQLLEAGVHFGHQTRRWNPKMAKYIFTERNGIHVIDLQQTVKLADQAYEFVRDAAANDAVILFVGTKKQAAEAVADEATRAGQYFINHRWLGGTLTNWGTIQKRIARLKEIKRMEEEGTFDVLPKKEVALLNKQRARLEKFLGGIEDMPRIPDVMYVVDPHKEQIAVKEAKKLGIPVVAMVDTNADPDDIDIIIPANDDAIRAVKLITAKLADAIIEGRQGEDADVAFEADTQADSIEEIVEVVEGDNA</sequence>